<organism>
    <name type="scientific">Rhodopirellula baltica (strain DSM 10527 / NCIMB 13988 / SH1)</name>
    <dbReference type="NCBI Taxonomy" id="243090"/>
    <lineage>
        <taxon>Bacteria</taxon>
        <taxon>Pseudomonadati</taxon>
        <taxon>Planctomycetota</taxon>
        <taxon>Planctomycetia</taxon>
        <taxon>Pirellulales</taxon>
        <taxon>Pirellulaceae</taxon>
        <taxon>Rhodopirellula</taxon>
    </lineage>
</organism>
<feature type="chain" id="PRO_0000042281" description="Phosphatidylserine decarboxylase beta chain" evidence="1">
    <location>
        <begin position="1"/>
        <end position="204"/>
    </location>
</feature>
<feature type="chain" id="PRO_0000042282" description="Phosphatidylserine decarboxylase alpha chain" evidence="1">
    <location>
        <begin position="205"/>
        <end position="240"/>
    </location>
</feature>
<feature type="active site" description="Schiff-base intermediate with substrate; via pyruvic acid" evidence="1">
    <location>
        <position position="205"/>
    </location>
</feature>
<feature type="site" description="Cleavage (non-hydrolytic); by autocatalysis" evidence="1">
    <location>
        <begin position="204"/>
        <end position="205"/>
    </location>
</feature>
<feature type="modified residue" description="Pyruvic acid (Ser); by autocatalysis" evidence="1">
    <location>
        <position position="205"/>
    </location>
</feature>
<name>PSD_RHOBA</name>
<protein>
    <recommendedName>
        <fullName evidence="1">Phosphatidylserine decarboxylase proenzyme</fullName>
        <ecNumber evidence="1">4.1.1.65</ecNumber>
    </recommendedName>
    <component>
        <recommendedName>
            <fullName evidence="1">Phosphatidylserine decarboxylase alpha chain</fullName>
        </recommendedName>
    </component>
    <component>
        <recommendedName>
            <fullName evidence="1">Phosphatidylserine decarboxylase beta chain</fullName>
        </recommendedName>
    </component>
</protein>
<sequence>MKYYRNQDSYWWADADDPFLWRESLPFVRVGLAELIIMTLVSLVLAVIAGWFWWPLAVPFVLVAALVAWFFRNPRRKVPETIGTVVSPADGKLVEIVEVDDPIIGAAVRFGIFLSVFNVHANRIAMPGRVVRVRYRPGKFLNALRSESTKENENIDVELECPEIGGRIVRIRQITGQFARRIVCWARVGDVLQRGEMFGMIKLGSRTELVIPRDEALEIVAQVGEKVCAGSTVFARYQQG</sequence>
<evidence type="ECO:0000255" key="1">
    <source>
        <dbReference type="HAMAP-Rule" id="MF_00664"/>
    </source>
</evidence>
<evidence type="ECO:0000305" key="2"/>
<gene>
    <name evidence="1" type="primary">psd</name>
    <name type="ordered locus">RB3822</name>
</gene>
<accession>Q7UTK9</accession>
<reference key="1">
    <citation type="journal article" date="2003" name="Proc. Natl. Acad. Sci. U.S.A.">
        <title>Complete genome sequence of the marine planctomycete Pirellula sp. strain 1.</title>
        <authorList>
            <person name="Gloeckner F.O."/>
            <person name="Kube M."/>
            <person name="Bauer M."/>
            <person name="Teeling H."/>
            <person name="Lombardot T."/>
            <person name="Ludwig W."/>
            <person name="Gade D."/>
            <person name="Beck A."/>
            <person name="Borzym K."/>
            <person name="Heitmann K."/>
            <person name="Rabus R."/>
            <person name="Schlesner H."/>
            <person name="Amann R."/>
            <person name="Reinhardt R."/>
        </authorList>
    </citation>
    <scope>NUCLEOTIDE SEQUENCE [LARGE SCALE GENOMIC DNA]</scope>
    <source>
        <strain>DSM 10527 / NCIMB 13988 / SH1</strain>
    </source>
</reference>
<keyword id="KW-1003">Cell membrane</keyword>
<keyword id="KW-0210">Decarboxylase</keyword>
<keyword id="KW-0444">Lipid biosynthesis</keyword>
<keyword id="KW-0443">Lipid metabolism</keyword>
<keyword id="KW-0456">Lyase</keyword>
<keyword id="KW-0472">Membrane</keyword>
<keyword id="KW-0594">Phospholipid biosynthesis</keyword>
<keyword id="KW-1208">Phospholipid metabolism</keyword>
<keyword id="KW-0670">Pyruvate</keyword>
<keyword id="KW-1185">Reference proteome</keyword>
<keyword id="KW-0865">Zymogen</keyword>
<dbReference type="EC" id="4.1.1.65" evidence="1"/>
<dbReference type="EMBL" id="BX294139">
    <property type="protein sequence ID" value="CAD73427.1"/>
    <property type="status" value="ALT_INIT"/>
    <property type="molecule type" value="Genomic_DNA"/>
</dbReference>
<dbReference type="RefSeq" id="NP_865742.2">
    <property type="nucleotide sequence ID" value="NC_005027.1"/>
</dbReference>
<dbReference type="STRING" id="243090.RB3822"/>
<dbReference type="EnsemblBacteria" id="CAD73427">
    <property type="protein sequence ID" value="CAD73427"/>
    <property type="gene ID" value="RB3822"/>
</dbReference>
<dbReference type="KEGG" id="rba:RB3822"/>
<dbReference type="PATRIC" id="fig|243090.15.peg.1778"/>
<dbReference type="eggNOG" id="COG0688">
    <property type="taxonomic scope" value="Bacteria"/>
</dbReference>
<dbReference type="HOGENOM" id="CLU_839062_0_0_0"/>
<dbReference type="InParanoid" id="Q7UTK9"/>
<dbReference type="OrthoDB" id="9790893at2"/>
<dbReference type="UniPathway" id="UPA00558">
    <property type="reaction ID" value="UER00616"/>
</dbReference>
<dbReference type="Proteomes" id="UP000001025">
    <property type="component" value="Chromosome"/>
</dbReference>
<dbReference type="GO" id="GO:0005886">
    <property type="term" value="C:plasma membrane"/>
    <property type="evidence" value="ECO:0007669"/>
    <property type="project" value="UniProtKB-SubCell"/>
</dbReference>
<dbReference type="GO" id="GO:0004609">
    <property type="term" value="F:phosphatidylserine decarboxylase activity"/>
    <property type="evidence" value="ECO:0007669"/>
    <property type="project" value="UniProtKB-UniRule"/>
</dbReference>
<dbReference type="GO" id="GO:0006646">
    <property type="term" value="P:phosphatidylethanolamine biosynthetic process"/>
    <property type="evidence" value="ECO:0007669"/>
    <property type="project" value="UniProtKB-UniRule"/>
</dbReference>
<dbReference type="HAMAP" id="MF_00664">
    <property type="entry name" value="PS_decarb_PSD_A"/>
    <property type="match status" value="1"/>
</dbReference>
<dbReference type="InterPro" id="IPR003817">
    <property type="entry name" value="PS_Dcarbxylase"/>
</dbReference>
<dbReference type="InterPro" id="IPR033175">
    <property type="entry name" value="PSD-A"/>
</dbReference>
<dbReference type="NCBIfam" id="NF003678">
    <property type="entry name" value="PRK05305.1-2"/>
    <property type="match status" value="1"/>
</dbReference>
<dbReference type="PANTHER" id="PTHR35809">
    <property type="entry name" value="ARCHAETIDYLSERINE DECARBOXYLASE PROENZYME-RELATED"/>
    <property type="match status" value="1"/>
</dbReference>
<dbReference type="PANTHER" id="PTHR35809:SF1">
    <property type="entry name" value="ARCHAETIDYLSERINE DECARBOXYLASE PROENZYME-RELATED"/>
    <property type="match status" value="1"/>
</dbReference>
<dbReference type="Pfam" id="PF02666">
    <property type="entry name" value="PS_Dcarbxylase"/>
    <property type="match status" value="1"/>
</dbReference>
<comment type="function">
    <text evidence="1">Catalyzes the formation of phosphatidylethanolamine (PtdEtn) from phosphatidylserine (PtdSer).</text>
</comment>
<comment type="catalytic activity">
    <reaction evidence="1">
        <text>a 1,2-diacyl-sn-glycero-3-phospho-L-serine + H(+) = a 1,2-diacyl-sn-glycero-3-phosphoethanolamine + CO2</text>
        <dbReference type="Rhea" id="RHEA:20828"/>
        <dbReference type="ChEBI" id="CHEBI:15378"/>
        <dbReference type="ChEBI" id="CHEBI:16526"/>
        <dbReference type="ChEBI" id="CHEBI:57262"/>
        <dbReference type="ChEBI" id="CHEBI:64612"/>
        <dbReference type="EC" id="4.1.1.65"/>
    </reaction>
</comment>
<comment type="cofactor">
    <cofactor evidence="1">
        <name>pyruvate</name>
        <dbReference type="ChEBI" id="CHEBI:15361"/>
    </cofactor>
    <text evidence="1">Binds 1 pyruvoyl group covalently per subunit.</text>
</comment>
<comment type="pathway">
    <text evidence="1">Phospholipid metabolism; phosphatidylethanolamine biosynthesis; phosphatidylethanolamine from CDP-diacylglycerol: step 2/2.</text>
</comment>
<comment type="subunit">
    <text evidence="1">Heterodimer of a large membrane-associated beta subunit and a small pyruvoyl-containing alpha subunit.</text>
</comment>
<comment type="subcellular location">
    <subcellularLocation>
        <location evidence="1">Cell membrane</location>
        <topology evidence="1">Peripheral membrane protein</topology>
    </subcellularLocation>
</comment>
<comment type="PTM">
    <text evidence="1">Is synthesized initially as an inactive proenzyme. Formation of the active enzyme involves a self-maturation process in which the active site pyruvoyl group is generated from an internal serine residue via an autocatalytic post-translational modification. Two non-identical subunits are generated from the proenzyme in this reaction, and the pyruvate is formed at the N-terminus of the alpha chain, which is derived from the carboxyl end of the proenzyme. The post-translation cleavage follows an unusual pathway, termed non-hydrolytic serinolysis, in which the side chain hydroxyl group of the serine supplies its oxygen atom to form the C-terminus of the beta chain, while the remainder of the serine residue undergoes an oxidative deamination to produce ammonia and the pyruvoyl prosthetic group on the alpha chain.</text>
</comment>
<comment type="similarity">
    <text evidence="1">Belongs to the phosphatidylserine decarboxylase family. PSD-A subfamily.</text>
</comment>
<comment type="sequence caution" evidence="2">
    <conflict type="erroneous initiation">
        <sequence resource="EMBL-CDS" id="CAD73427"/>
    </conflict>
</comment>
<proteinExistence type="inferred from homology"/>